<gene>
    <name evidence="1" type="primary">rpsI</name>
    <name type="ordered locus">RrIowa_0381</name>
</gene>
<sequence length="159" mass="18000">MPELKIKTEKVEKQLTKEPLVLKTPKEKIDNLGKFYATGKRKNAIARVWLKVGKGKIVVNKKTIAQYFPSETYVKTILQPFVLTKTIDQYDIICTVRGGGISGQKGAILHGISKALDKSAPDFRAILRKGGLLTRDSRVVERKKYGQRKARKKTQFSKR</sequence>
<protein>
    <recommendedName>
        <fullName evidence="1">Small ribosomal subunit protein uS9</fullName>
    </recommendedName>
    <alternativeName>
        <fullName evidence="2">30S ribosomal protein S9</fullName>
    </alternativeName>
</protein>
<accession>B0BWQ1</accession>
<keyword id="KW-0687">Ribonucleoprotein</keyword>
<keyword id="KW-0689">Ribosomal protein</keyword>
<reference key="1">
    <citation type="journal article" date="2008" name="Infect. Immun.">
        <title>Genomic comparison of virulent Rickettsia rickettsii Sheila Smith and avirulent Rickettsia rickettsii Iowa.</title>
        <authorList>
            <person name="Ellison D.W."/>
            <person name="Clark T.R."/>
            <person name="Sturdevant D.E."/>
            <person name="Virtaneva K."/>
            <person name="Porcella S.F."/>
            <person name="Hackstadt T."/>
        </authorList>
    </citation>
    <scope>NUCLEOTIDE SEQUENCE [LARGE SCALE GENOMIC DNA]</scope>
    <source>
        <strain>Iowa</strain>
    </source>
</reference>
<comment type="similarity">
    <text evidence="1">Belongs to the universal ribosomal protein uS9 family.</text>
</comment>
<organism>
    <name type="scientific">Rickettsia rickettsii (strain Iowa)</name>
    <dbReference type="NCBI Taxonomy" id="452659"/>
    <lineage>
        <taxon>Bacteria</taxon>
        <taxon>Pseudomonadati</taxon>
        <taxon>Pseudomonadota</taxon>
        <taxon>Alphaproteobacteria</taxon>
        <taxon>Rickettsiales</taxon>
        <taxon>Rickettsiaceae</taxon>
        <taxon>Rickettsieae</taxon>
        <taxon>Rickettsia</taxon>
        <taxon>spotted fever group</taxon>
    </lineage>
</organism>
<feature type="chain" id="PRO_1000081827" description="Small ribosomal subunit protein uS9">
    <location>
        <begin position="1"/>
        <end position="159"/>
    </location>
</feature>
<evidence type="ECO:0000255" key="1">
    <source>
        <dbReference type="HAMAP-Rule" id="MF_00532"/>
    </source>
</evidence>
<evidence type="ECO:0000305" key="2"/>
<name>RS9_RICRO</name>
<dbReference type="EMBL" id="CP000766">
    <property type="protein sequence ID" value="ABY72277.1"/>
    <property type="molecule type" value="Genomic_DNA"/>
</dbReference>
<dbReference type="RefSeq" id="WP_012150530.1">
    <property type="nucleotide sequence ID" value="NC_010263.3"/>
</dbReference>
<dbReference type="SMR" id="B0BWQ1"/>
<dbReference type="GeneID" id="79937091"/>
<dbReference type="KEGG" id="rrj:RrIowa_0381"/>
<dbReference type="eggNOG" id="COG0103">
    <property type="taxonomic scope" value="Bacteria"/>
</dbReference>
<dbReference type="HOGENOM" id="CLU_046483_2_0_5"/>
<dbReference type="Proteomes" id="UP000000796">
    <property type="component" value="Chromosome"/>
</dbReference>
<dbReference type="GO" id="GO:0022627">
    <property type="term" value="C:cytosolic small ribosomal subunit"/>
    <property type="evidence" value="ECO:0007669"/>
    <property type="project" value="TreeGrafter"/>
</dbReference>
<dbReference type="GO" id="GO:0003723">
    <property type="term" value="F:RNA binding"/>
    <property type="evidence" value="ECO:0007669"/>
    <property type="project" value="TreeGrafter"/>
</dbReference>
<dbReference type="GO" id="GO:0003735">
    <property type="term" value="F:structural constituent of ribosome"/>
    <property type="evidence" value="ECO:0007669"/>
    <property type="project" value="InterPro"/>
</dbReference>
<dbReference type="GO" id="GO:0006412">
    <property type="term" value="P:translation"/>
    <property type="evidence" value="ECO:0007669"/>
    <property type="project" value="UniProtKB-UniRule"/>
</dbReference>
<dbReference type="FunFam" id="3.30.230.10:FF:000001">
    <property type="entry name" value="30S ribosomal protein S9"/>
    <property type="match status" value="1"/>
</dbReference>
<dbReference type="Gene3D" id="3.30.230.10">
    <property type="match status" value="1"/>
</dbReference>
<dbReference type="HAMAP" id="MF_00532_B">
    <property type="entry name" value="Ribosomal_uS9_B"/>
    <property type="match status" value="1"/>
</dbReference>
<dbReference type="InterPro" id="IPR020568">
    <property type="entry name" value="Ribosomal_Su5_D2-typ_SF"/>
</dbReference>
<dbReference type="InterPro" id="IPR000754">
    <property type="entry name" value="Ribosomal_uS9"/>
</dbReference>
<dbReference type="InterPro" id="IPR023035">
    <property type="entry name" value="Ribosomal_uS9_bac/plastid"/>
</dbReference>
<dbReference type="InterPro" id="IPR020574">
    <property type="entry name" value="Ribosomal_uS9_CS"/>
</dbReference>
<dbReference type="InterPro" id="IPR014721">
    <property type="entry name" value="Ribsml_uS5_D2-typ_fold_subgr"/>
</dbReference>
<dbReference type="NCBIfam" id="NF001099">
    <property type="entry name" value="PRK00132.1"/>
    <property type="match status" value="1"/>
</dbReference>
<dbReference type="PANTHER" id="PTHR21569">
    <property type="entry name" value="RIBOSOMAL PROTEIN S9"/>
    <property type="match status" value="1"/>
</dbReference>
<dbReference type="PANTHER" id="PTHR21569:SF1">
    <property type="entry name" value="SMALL RIBOSOMAL SUBUNIT PROTEIN US9M"/>
    <property type="match status" value="1"/>
</dbReference>
<dbReference type="Pfam" id="PF00380">
    <property type="entry name" value="Ribosomal_S9"/>
    <property type="match status" value="1"/>
</dbReference>
<dbReference type="SUPFAM" id="SSF54211">
    <property type="entry name" value="Ribosomal protein S5 domain 2-like"/>
    <property type="match status" value="1"/>
</dbReference>
<dbReference type="PROSITE" id="PS00360">
    <property type="entry name" value="RIBOSOMAL_S9"/>
    <property type="match status" value="1"/>
</dbReference>
<proteinExistence type="inferred from homology"/>